<evidence type="ECO:0000250" key="1"/>
<evidence type="ECO:0000256" key="2">
    <source>
        <dbReference type="SAM" id="MobiDB-lite"/>
    </source>
</evidence>
<evidence type="ECO:0000305" key="3"/>
<feature type="chain" id="PRO_0000078455" description="Chaperone protein DnaK">
    <location>
        <begin position="1"/>
        <end position="656"/>
    </location>
</feature>
<feature type="region of interest" description="Disordered" evidence="2">
    <location>
        <begin position="607"/>
        <end position="656"/>
    </location>
</feature>
<feature type="compositionally biased region" description="Low complexity" evidence="2">
    <location>
        <begin position="620"/>
        <end position="632"/>
    </location>
</feature>
<feature type="compositionally biased region" description="Basic and acidic residues" evidence="2">
    <location>
        <begin position="647"/>
        <end position="656"/>
    </location>
</feature>
<feature type="modified residue" description="Phosphothreonine; by autocatalysis" evidence="1">
    <location>
        <position position="204"/>
    </location>
</feature>
<reference key="1">
    <citation type="journal article" date="1998" name="Infect. Immun.">
        <title>Identification of a 71-kilodalton surface-associated Hsp70 homologue in Coxiella burnetii.</title>
        <authorList>
            <person name="Macellaro A."/>
            <person name="Tujulin E."/>
            <person name="Hjalmarsson K."/>
            <person name="Norlander L."/>
        </authorList>
    </citation>
    <scope>NUCLEOTIDE SEQUENCE [GENOMIC DNA]</scope>
    <scope>PROTEIN SEQUENCE OF 1-10</scope>
    <source>
        <strain>RSA 493 / Nine Mile phase I</strain>
    </source>
</reference>
<reference key="2">
    <citation type="journal article" date="2003" name="Proc. Natl. Acad. Sci. U.S.A.">
        <title>Complete genome sequence of the Q-fever pathogen, Coxiella burnetii.</title>
        <authorList>
            <person name="Seshadri R."/>
            <person name="Paulsen I.T."/>
            <person name="Eisen J.A."/>
            <person name="Read T.D."/>
            <person name="Nelson K.E."/>
            <person name="Nelson W.C."/>
            <person name="Ward N.L."/>
            <person name="Tettelin H."/>
            <person name="Davidsen T.M."/>
            <person name="Beanan M.J."/>
            <person name="DeBoy R.T."/>
            <person name="Daugherty S.C."/>
            <person name="Brinkac L.M."/>
            <person name="Madupu R."/>
            <person name="Dodson R.J."/>
            <person name="Khouri H.M."/>
            <person name="Lee K.H."/>
            <person name="Carty H.A."/>
            <person name="Scanlan D."/>
            <person name="Heinzen R.A."/>
            <person name="Thompson H.A."/>
            <person name="Samuel J.E."/>
            <person name="Fraser C.M."/>
            <person name="Heidelberg J.F."/>
        </authorList>
    </citation>
    <scope>NUCLEOTIDE SEQUENCE [LARGE SCALE GENOMIC DNA]</scope>
    <source>
        <strain>RSA 493 / Nine Mile phase I</strain>
    </source>
</reference>
<proteinExistence type="evidence at protein level"/>
<organism>
    <name type="scientific">Coxiella burnetii (strain RSA 493 / Nine Mile phase I)</name>
    <dbReference type="NCBI Taxonomy" id="227377"/>
    <lineage>
        <taxon>Bacteria</taxon>
        <taxon>Pseudomonadati</taxon>
        <taxon>Pseudomonadota</taxon>
        <taxon>Gammaproteobacteria</taxon>
        <taxon>Legionellales</taxon>
        <taxon>Coxiellaceae</taxon>
        <taxon>Coxiella</taxon>
    </lineage>
</organism>
<comment type="function">
    <text evidence="1">Acts as a chaperone (By similarity). Might have a role in the infectious process.</text>
</comment>
<comment type="subcellular location">
    <subcellularLocation>
        <location>Cytoplasm</location>
    </subcellularLocation>
    <subcellularLocation>
        <location>Cell membrane</location>
        <topology>Peripheral membrane protein</topology>
    </subcellularLocation>
</comment>
<comment type="induction">
    <text>By heat shock and acidic conditions.</text>
</comment>
<comment type="similarity">
    <text evidence="3">Belongs to the heat shock protein 70 family.</text>
</comment>
<keyword id="KW-0067">ATP-binding</keyword>
<keyword id="KW-1003">Cell membrane</keyword>
<keyword id="KW-0143">Chaperone</keyword>
<keyword id="KW-0963">Cytoplasm</keyword>
<keyword id="KW-0903">Direct protein sequencing</keyword>
<keyword id="KW-0472">Membrane</keyword>
<keyword id="KW-0547">Nucleotide-binding</keyword>
<keyword id="KW-0597">Phosphoprotein</keyword>
<keyword id="KW-1185">Reference proteome</keyword>
<keyword id="KW-0346">Stress response</keyword>
<sequence length="656" mass="70755">MAEIIGIDLGTTNSCVAVMEGGKVRVIENAEGSRTTPSIVAYTKDGEVLVGASAKRQAVTNADRTLYAIKRLIGRRFDDNVVQKDIKMVPYKIIKADNGDAWVEVKDKEGKSQKLAPPQISAQVLIKMKKTAEDYLGHEVKDAVITVPAYFNDSQRQATKDAGKIAGLNVKRIINEPTAAALAYGMDKKKGDRKIAVYDLGGGTFDISIIEIAEVDGEHQFEVLATNGDTFLGGEDFDLRLIDYLAGEFKKDEGVDLHNDPLALQRLKEAAEKAKIELSSSQQTDVNLPYITADASGPKHLNIRLTRAKLESLVEDLVERTIEPCKVAIKDAGLKVSEIDDVILVGGQTRMPKVQEAVKNFFGKEARKDVNPDEAVAIGAAIQGAVLSGEVKDVLLLDVTPLSLGIETLGGVMTKLIEKNTTIPTKANQVFSTADDNQTAVTVHVLQGEREMASANKSLGRFDLSDIPPAPRGVPQIEVTFDIDANGILHVSAKDKATGKEQSIVIKASSGLSDEEVEKMVKDAEAHRDSDRKFHELVDARNQADAMIHAAEKSVKDLGSEVSADEKSAIEKAVNELKEAMKGNDKDAIEAKTKALTEHSSKLAERVYAKKGGAAGAPPGGEAEGEPQAQAGGKKEDVVDAEFEEVKDEKKKDEDK</sequence>
<accession>O87712</accession>
<dbReference type="EMBL" id="AJ005700">
    <property type="protein sequence ID" value="CAA06685.1"/>
    <property type="molecule type" value="Genomic_DNA"/>
</dbReference>
<dbReference type="EMBL" id="AE016828">
    <property type="protein sequence ID" value="AAO90796.1"/>
    <property type="molecule type" value="Genomic_DNA"/>
</dbReference>
<dbReference type="RefSeq" id="NP_820282.1">
    <property type="nucleotide sequence ID" value="NC_002971.4"/>
</dbReference>
<dbReference type="RefSeq" id="WP_005770882.1">
    <property type="nucleotide sequence ID" value="NZ_CDBG01000001.1"/>
</dbReference>
<dbReference type="SMR" id="O87712"/>
<dbReference type="STRING" id="227377.CBU_1290"/>
<dbReference type="EnsemblBacteria" id="AAO90796">
    <property type="protein sequence ID" value="AAO90796"/>
    <property type="gene ID" value="CBU_1290"/>
</dbReference>
<dbReference type="GeneID" id="1209195"/>
<dbReference type="KEGG" id="cbu:CBU_1290"/>
<dbReference type="PATRIC" id="fig|227377.7.peg.1285"/>
<dbReference type="eggNOG" id="COG0443">
    <property type="taxonomic scope" value="Bacteria"/>
</dbReference>
<dbReference type="HOGENOM" id="CLU_005965_2_1_6"/>
<dbReference type="OrthoDB" id="9766019at2"/>
<dbReference type="Proteomes" id="UP000002671">
    <property type="component" value="Chromosome"/>
</dbReference>
<dbReference type="GO" id="GO:0005829">
    <property type="term" value="C:cytosol"/>
    <property type="evidence" value="ECO:0000318"/>
    <property type="project" value="GO_Central"/>
</dbReference>
<dbReference type="GO" id="GO:0005886">
    <property type="term" value="C:plasma membrane"/>
    <property type="evidence" value="ECO:0007669"/>
    <property type="project" value="UniProtKB-SubCell"/>
</dbReference>
<dbReference type="GO" id="GO:0005524">
    <property type="term" value="F:ATP binding"/>
    <property type="evidence" value="ECO:0007669"/>
    <property type="project" value="UniProtKB-UniRule"/>
</dbReference>
<dbReference type="GO" id="GO:0016887">
    <property type="term" value="F:ATP hydrolysis activity"/>
    <property type="evidence" value="ECO:0000318"/>
    <property type="project" value="GO_Central"/>
</dbReference>
<dbReference type="GO" id="GO:0140662">
    <property type="term" value="F:ATP-dependent protein folding chaperone"/>
    <property type="evidence" value="ECO:0007669"/>
    <property type="project" value="InterPro"/>
</dbReference>
<dbReference type="GO" id="GO:0031072">
    <property type="term" value="F:heat shock protein binding"/>
    <property type="evidence" value="ECO:0000318"/>
    <property type="project" value="GO_Central"/>
</dbReference>
<dbReference type="GO" id="GO:0044183">
    <property type="term" value="F:protein folding chaperone"/>
    <property type="evidence" value="ECO:0000318"/>
    <property type="project" value="GO_Central"/>
</dbReference>
<dbReference type="GO" id="GO:0051082">
    <property type="term" value="F:unfolded protein binding"/>
    <property type="evidence" value="ECO:0007669"/>
    <property type="project" value="InterPro"/>
</dbReference>
<dbReference type="GO" id="GO:0051085">
    <property type="term" value="P:chaperone cofactor-dependent protein refolding"/>
    <property type="evidence" value="ECO:0000318"/>
    <property type="project" value="GO_Central"/>
</dbReference>
<dbReference type="GO" id="GO:0042026">
    <property type="term" value="P:protein refolding"/>
    <property type="evidence" value="ECO:0000318"/>
    <property type="project" value="GO_Central"/>
</dbReference>
<dbReference type="CDD" id="cd10234">
    <property type="entry name" value="ASKHA_NBD_HSP70_DnaK-like"/>
    <property type="match status" value="1"/>
</dbReference>
<dbReference type="FunFam" id="2.60.34.10:FF:000014">
    <property type="entry name" value="Chaperone protein DnaK HSP70"/>
    <property type="match status" value="1"/>
</dbReference>
<dbReference type="FunFam" id="3.30.30.30:FF:000003">
    <property type="entry name" value="Heat shock protein 9"/>
    <property type="match status" value="1"/>
</dbReference>
<dbReference type="FunFam" id="1.20.1270.10:FF:000001">
    <property type="entry name" value="Molecular chaperone DnaK"/>
    <property type="match status" value="1"/>
</dbReference>
<dbReference type="FunFam" id="3.30.420.40:FF:000004">
    <property type="entry name" value="Molecular chaperone DnaK"/>
    <property type="match status" value="1"/>
</dbReference>
<dbReference type="FunFam" id="3.90.640.10:FF:000003">
    <property type="entry name" value="Molecular chaperone DnaK"/>
    <property type="match status" value="1"/>
</dbReference>
<dbReference type="Gene3D" id="1.20.1270.10">
    <property type="match status" value="1"/>
</dbReference>
<dbReference type="Gene3D" id="3.30.420.40">
    <property type="match status" value="2"/>
</dbReference>
<dbReference type="Gene3D" id="3.90.640.10">
    <property type="entry name" value="Actin, Chain A, domain 4"/>
    <property type="match status" value="1"/>
</dbReference>
<dbReference type="Gene3D" id="2.60.34.10">
    <property type="entry name" value="Substrate Binding Domain Of DNAk, Chain A, domain 1"/>
    <property type="match status" value="1"/>
</dbReference>
<dbReference type="HAMAP" id="MF_00332">
    <property type="entry name" value="DnaK"/>
    <property type="match status" value="1"/>
</dbReference>
<dbReference type="InterPro" id="IPR043129">
    <property type="entry name" value="ATPase_NBD"/>
</dbReference>
<dbReference type="InterPro" id="IPR012725">
    <property type="entry name" value="Chaperone_DnaK"/>
</dbReference>
<dbReference type="InterPro" id="IPR018181">
    <property type="entry name" value="Heat_shock_70_CS"/>
</dbReference>
<dbReference type="InterPro" id="IPR029048">
    <property type="entry name" value="HSP70_C_sf"/>
</dbReference>
<dbReference type="InterPro" id="IPR029047">
    <property type="entry name" value="HSP70_peptide-bd_sf"/>
</dbReference>
<dbReference type="InterPro" id="IPR013126">
    <property type="entry name" value="Hsp_70_fam"/>
</dbReference>
<dbReference type="NCBIfam" id="NF001413">
    <property type="entry name" value="PRK00290.1"/>
    <property type="match status" value="1"/>
</dbReference>
<dbReference type="NCBIfam" id="NF003520">
    <property type="entry name" value="PRK05183.1"/>
    <property type="match status" value="1"/>
</dbReference>
<dbReference type="NCBIfam" id="TIGR02350">
    <property type="entry name" value="prok_dnaK"/>
    <property type="match status" value="1"/>
</dbReference>
<dbReference type="PANTHER" id="PTHR19375">
    <property type="entry name" value="HEAT SHOCK PROTEIN 70KDA"/>
    <property type="match status" value="1"/>
</dbReference>
<dbReference type="Pfam" id="PF00012">
    <property type="entry name" value="HSP70"/>
    <property type="match status" value="1"/>
</dbReference>
<dbReference type="PRINTS" id="PR00301">
    <property type="entry name" value="HEATSHOCK70"/>
</dbReference>
<dbReference type="SUPFAM" id="SSF53067">
    <property type="entry name" value="Actin-like ATPase domain"/>
    <property type="match status" value="2"/>
</dbReference>
<dbReference type="SUPFAM" id="SSF100934">
    <property type="entry name" value="Heat shock protein 70kD (HSP70), C-terminal subdomain"/>
    <property type="match status" value="1"/>
</dbReference>
<dbReference type="SUPFAM" id="SSF100920">
    <property type="entry name" value="Heat shock protein 70kD (HSP70), peptide-binding domain"/>
    <property type="match status" value="1"/>
</dbReference>
<dbReference type="PROSITE" id="PS00297">
    <property type="entry name" value="HSP70_1"/>
    <property type="match status" value="1"/>
</dbReference>
<dbReference type="PROSITE" id="PS00329">
    <property type="entry name" value="HSP70_2"/>
    <property type="match status" value="1"/>
</dbReference>
<dbReference type="PROSITE" id="PS01036">
    <property type="entry name" value="HSP70_3"/>
    <property type="match status" value="1"/>
</dbReference>
<name>DNAK_COXBU</name>
<gene>
    <name type="primary">dnaK</name>
    <name type="synonym">hsp71</name>
    <name type="ordered locus">CBU_1290</name>
</gene>
<protein>
    <recommendedName>
        <fullName>Chaperone protein DnaK</fullName>
    </recommendedName>
    <alternativeName>
        <fullName>HSP70</fullName>
    </alternativeName>
    <alternativeName>
        <fullName>Heat shock 70 kDa protein</fullName>
    </alternativeName>
    <alternativeName>
        <fullName>Heat shock protein 70</fullName>
    </alternativeName>
</protein>